<comment type="pathway">
    <text>Antibiotic biosynthesis; actinorhodin biosynthesis.</text>
</comment>
<comment type="similarity">
    <text evidence="3">Belongs to the thiolase-like superfamily. Beta-ketoacyl-ACP synthases family.</text>
</comment>
<comment type="sequence caution" evidence="3">
    <conflict type="erroneous initiation">
        <sequence resource="EMBL-CDS" id="CAA45043"/>
    </conflict>
</comment>
<accession>Q02059</accession>
<accession>Q93IZ1</accession>
<organism>
    <name type="scientific">Streptomyces coelicolor (strain ATCC BAA-471 / A3(2) / M145)</name>
    <dbReference type="NCBI Taxonomy" id="100226"/>
    <lineage>
        <taxon>Bacteria</taxon>
        <taxon>Bacillati</taxon>
        <taxon>Actinomycetota</taxon>
        <taxon>Actinomycetes</taxon>
        <taxon>Kitasatosporales</taxon>
        <taxon>Streptomycetaceae</taxon>
        <taxon>Streptomyces</taxon>
        <taxon>Streptomyces albidoflavus group</taxon>
    </lineage>
</organism>
<dbReference type="EC" id="2.3.1.-"/>
<dbReference type="EMBL" id="AL939122">
    <property type="protein sequence ID" value="CAC44200.1"/>
    <property type="molecule type" value="Genomic_DNA"/>
</dbReference>
<dbReference type="EMBL" id="X63449">
    <property type="protein sequence ID" value="CAA45043.1"/>
    <property type="status" value="ALT_INIT"/>
    <property type="molecule type" value="Genomic_DNA"/>
</dbReference>
<dbReference type="PIR" id="S25840">
    <property type="entry name" value="S25840"/>
</dbReference>
<dbReference type="RefSeq" id="NP_629237.1">
    <property type="nucleotide sequence ID" value="NC_003888.3"/>
</dbReference>
<dbReference type="RefSeq" id="WP_003973891.1">
    <property type="nucleotide sequence ID" value="NZ_VNID01000008.1"/>
</dbReference>
<dbReference type="PDB" id="1TQY">
    <property type="method" value="X-ray"/>
    <property type="resolution" value="2.00 A"/>
    <property type="chains" value="A/C/E/G=45-467"/>
</dbReference>
<dbReference type="PDBsum" id="1TQY"/>
<dbReference type="SMR" id="Q02059"/>
<dbReference type="IntAct" id="Q02059">
    <property type="interactions" value="1"/>
</dbReference>
<dbReference type="STRING" id="100226.gene:17762736"/>
<dbReference type="PaxDb" id="100226-SCO5087"/>
<dbReference type="KEGG" id="sco:SCO5087"/>
<dbReference type="PATRIC" id="fig|100226.15.peg.5167"/>
<dbReference type="eggNOG" id="COG0304">
    <property type="taxonomic scope" value="Bacteria"/>
</dbReference>
<dbReference type="HOGENOM" id="CLU_000022_69_2_11"/>
<dbReference type="InParanoid" id="Q02059"/>
<dbReference type="OrthoDB" id="9808669at2"/>
<dbReference type="PhylomeDB" id="Q02059"/>
<dbReference type="UniPathway" id="UPA00173"/>
<dbReference type="EvolutionaryTrace" id="Q02059"/>
<dbReference type="Proteomes" id="UP000001973">
    <property type="component" value="Chromosome"/>
</dbReference>
<dbReference type="GO" id="GO:0005829">
    <property type="term" value="C:cytosol"/>
    <property type="evidence" value="ECO:0000318"/>
    <property type="project" value="GO_Central"/>
</dbReference>
<dbReference type="GO" id="GO:0004315">
    <property type="term" value="F:3-oxoacyl-[acyl-carrier-protein] synthase activity"/>
    <property type="evidence" value="ECO:0000318"/>
    <property type="project" value="GO_Central"/>
</dbReference>
<dbReference type="GO" id="GO:0017000">
    <property type="term" value="P:antibiotic biosynthetic process"/>
    <property type="evidence" value="ECO:0007669"/>
    <property type="project" value="UniProtKB-KW"/>
</dbReference>
<dbReference type="GO" id="GO:0006633">
    <property type="term" value="P:fatty acid biosynthetic process"/>
    <property type="evidence" value="ECO:0000318"/>
    <property type="project" value="GO_Central"/>
</dbReference>
<dbReference type="CDD" id="cd00834">
    <property type="entry name" value="KAS_I_II"/>
    <property type="match status" value="1"/>
</dbReference>
<dbReference type="FunFam" id="3.40.47.10:FF:000029">
    <property type="entry name" value="3-oxoacyl-[acyl-carrier-protein] synthase 1"/>
    <property type="match status" value="1"/>
</dbReference>
<dbReference type="FunFam" id="3.40.47.10:FF:000018">
    <property type="entry name" value="3-oxoacyl-[acyl-carrier-protein] synthase 2"/>
    <property type="match status" value="1"/>
</dbReference>
<dbReference type="Gene3D" id="3.40.47.10">
    <property type="match status" value="2"/>
</dbReference>
<dbReference type="InterPro" id="IPR000794">
    <property type="entry name" value="Beta-ketoacyl_synthase"/>
</dbReference>
<dbReference type="InterPro" id="IPR018201">
    <property type="entry name" value="Ketoacyl_synth_AS"/>
</dbReference>
<dbReference type="InterPro" id="IPR014031">
    <property type="entry name" value="Ketoacyl_synth_C"/>
</dbReference>
<dbReference type="InterPro" id="IPR014030">
    <property type="entry name" value="Ketoacyl_synth_N"/>
</dbReference>
<dbReference type="InterPro" id="IPR020841">
    <property type="entry name" value="PKS_Beta-ketoAc_synthase_dom"/>
</dbReference>
<dbReference type="InterPro" id="IPR016039">
    <property type="entry name" value="Thiolase-like"/>
</dbReference>
<dbReference type="NCBIfam" id="NF005589">
    <property type="entry name" value="PRK07314.1"/>
    <property type="match status" value="1"/>
</dbReference>
<dbReference type="PANTHER" id="PTHR11712:SF336">
    <property type="entry name" value="3-OXOACYL-[ACYL-CARRIER-PROTEIN] SYNTHASE, MITOCHONDRIAL"/>
    <property type="match status" value="1"/>
</dbReference>
<dbReference type="PANTHER" id="PTHR11712">
    <property type="entry name" value="POLYKETIDE SYNTHASE-RELATED"/>
    <property type="match status" value="1"/>
</dbReference>
<dbReference type="Pfam" id="PF00109">
    <property type="entry name" value="ketoacyl-synt"/>
    <property type="match status" value="1"/>
</dbReference>
<dbReference type="Pfam" id="PF02801">
    <property type="entry name" value="Ketoacyl-synt_C"/>
    <property type="match status" value="1"/>
</dbReference>
<dbReference type="SMART" id="SM00825">
    <property type="entry name" value="PKS_KS"/>
    <property type="match status" value="1"/>
</dbReference>
<dbReference type="SUPFAM" id="SSF53901">
    <property type="entry name" value="Thiolase-like"/>
    <property type="match status" value="1"/>
</dbReference>
<dbReference type="PROSITE" id="PS00606">
    <property type="entry name" value="KS3_1"/>
    <property type="match status" value="1"/>
</dbReference>
<dbReference type="PROSITE" id="PS52004">
    <property type="entry name" value="KS3_2"/>
    <property type="match status" value="1"/>
</dbReference>
<protein>
    <recommendedName>
        <fullName>Actinorhodin polyketide putative beta-ketoacyl synthase 1</fullName>
        <ecNumber>2.3.1.-</ecNumber>
    </recommendedName>
    <alternativeName>
        <fullName>actI ORF1</fullName>
    </alternativeName>
</protein>
<reference key="1">
    <citation type="journal article" date="2002" name="Nature">
        <title>Complete genome sequence of the model actinomycete Streptomyces coelicolor A3(2).</title>
        <authorList>
            <person name="Bentley S.D."/>
            <person name="Chater K.F."/>
            <person name="Cerdeno-Tarraga A.-M."/>
            <person name="Challis G.L."/>
            <person name="Thomson N.R."/>
            <person name="James K.D."/>
            <person name="Harris D.E."/>
            <person name="Quail M.A."/>
            <person name="Kieser H."/>
            <person name="Harper D."/>
            <person name="Bateman A."/>
            <person name="Brown S."/>
            <person name="Chandra G."/>
            <person name="Chen C.W."/>
            <person name="Collins M."/>
            <person name="Cronin A."/>
            <person name="Fraser A."/>
            <person name="Goble A."/>
            <person name="Hidalgo J."/>
            <person name="Hornsby T."/>
            <person name="Howarth S."/>
            <person name="Huang C.-H."/>
            <person name="Kieser T."/>
            <person name="Larke L."/>
            <person name="Murphy L.D."/>
            <person name="Oliver K."/>
            <person name="O'Neil S."/>
            <person name="Rabbinowitsch E."/>
            <person name="Rajandream M.A."/>
            <person name="Rutherford K.M."/>
            <person name="Rutter S."/>
            <person name="Seeger K."/>
            <person name="Saunders D."/>
            <person name="Sharp S."/>
            <person name="Squares R."/>
            <person name="Squares S."/>
            <person name="Taylor K."/>
            <person name="Warren T."/>
            <person name="Wietzorrek A."/>
            <person name="Woodward J.R."/>
            <person name="Barrell B.G."/>
            <person name="Parkhill J."/>
            <person name="Hopwood D.A."/>
        </authorList>
    </citation>
    <scope>NUCLEOTIDE SEQUENCE [LARGE SCALE GENOMIC DNA]</scope>
    <source>
        <strain>ATCC BAA-471 / A3(2) / M145</strain>
    </source>
</reference>
<reference key="2">
    <citation type="journal article" date="1992" name="J. Biol. Chem.">
        <title>Nucleotide sequence and deduced functions of a set of cotranscribed genes of Streptomyces coelicolor A3(2) including the polyketide synthase for the antibiotic actinorhodin.</title>
        <authorList>
            <person name="Fernandez-Moreno M.A."/>
            <person name="Martinez E."/>
            <person name="Boto L."/>
            <person name="Hopwood D.A."/>
            <person name="Malpartida F."/>
        </authorList>
    </citation>
    <scope>NUCLEOTIDE SEQUENCE [GENOMIC DNA] OF 9-467</scope>
    <source>
        <strain>ATCC BAA-471 / A3(2) / M145</strain>
    </source>
</reference>
<keyword id="KW-0002">3D-structure</keyword>
<keyword id="KW-0012">Acyltransferase</keyword>
<keyword id="KW-0045">Antibiotic biosynthesis</keyword>
<keyword id="KW-1185">Reference proteome</keyword>
<keyword id="KW-0808">Transferase</keyword>
<name>ACTI1_STRCO</name>
<proteinExistence type="evidence at protein level"/>
<gene>
    <name type="ordered locus">SCO5087</name>
    <name type="ORF">SCBAC28G1.13</name>
</gene>
<feature type="chain" id="PRO_0000180342" description="Actinorhodin polyketide putative beta-ketoacyl synthase 1">
    <location>
        <begin position="1"/>
        <end position="467"/>
    </location>
</feature>
<feature type="domain" description="Ketosynthase family 3 (KS3)" evidence="1">
    <location>
        <begin position="45"/>
        <end position="459"/>
    </location>
</feature>
<feature type="region of interest" description="Disordered" evidence="2">
    <location>
        <begin position="1"/>
        <end position="35"/>
    </location>
</feature>
<feature type="active site" description="For beta-ketoacyl synthase activity" evidence="1">
    <location>
        <position position="212"/>
    </location>
</feature>
<feature type="active site" description="For beta-ketoacyl synthase activity" evidence="1">
    <location>
        <position position="352"/>
    </location>
</feature>
<feature type="active site" description="For beta-ketoacyl synthase activity" evidence="1">
    <location>
        <position position="389"/>
    </location>
</feature>
<feature type="strand" evidence="4">
    <location>
        <begin position="48"/>
        <end position="57"/>
    </location>
</feature>
<feature type="strand" evidence="4">
    <location>
        <begin position="60"/>
        <end position="62"/>
    </location>
</feature>
<feature type="helix" evidence="4">
    <location>
        <begin position="63"/>
        <end position="72"/>
    </location>
</feature>
<feature type="strand" evidence="4">
    <location>
        <begin position="77"/>
        <end position="79"/>
    </location>
</feature>
<feature type="strand" evidence="4">
    <location>
        <begin position="92"/>
        <end position="94"/>
    </location>
</feature>
<feature type="helix" evidence="4">
    <location>
        <begin position="100"/>
        <end position="103"/>
    </location>
</feature>
<feature type="helix" evidence="4">
    <location>
        <begin position="107"/>
        <end position="112"/>
    </location>
</feature>
<feature type="helix" evidence="4">
    <location>
        <begin position="115"/>
        <end position="131"/>
    </location>
</feature>
<feature type="turn" evidence="4">
    <location>
        <begin position="135"/>
        <end position="137"/>
    </location>
</feature>
<feature type="helix" evidence="4">
    <location>
        <begin position="140"/>
        <end position="142"/>
    </location>
</feature>
<feature type="strand" evidence="4">
    <location>
        <begin position="143"/>
        <end position="148"/>
    </location>
</feature>
<feature type="helix" evidence="4">
    <location>
        <begin position="154"/>
        <end position="165"/>
    </location>
</feature>
<feature type="turn" evidence="4">
    <location>
        <begin position="166"/>
        <end position="169"/>
    </location>
</feature>
<feature type="helix" evidence="4">
    <location>
        <begin position="175"/>
        <end position="177"/>
    </location>
</feature>
<feature type="turn" evidence="4">
    <location>
        <begin position="180"/>
        <end position="182"/>
    </location>
</feature>
<feature type="helix" evidence="4">
    <location>
        <begin position="183"/>
        <end position="186"/>
    </location>
</feature>
<feature type="helix" evidence="4">
    <location>
        <begin position="190"/>
        <end position="199"/>
    </location>
</feature>
<feature type="strand" evidence="4">
    <location>
        <begin position="205"/>
        <end position="208"/>
    </location>
</feature>
<feature type="helix" evidence="4">
    <location>
        <begin position="211"/>
        <end position="213"/>
    </location>
</feature>
<feature type="helix" evidence="4">
    <location>
        <begin position="214"/>
        <end position="227"/>
    </location>
</feature>
<feature type="strand" evidence="4">
    <location>
        <begin position="232"/>
        <end position="240"/>
    </location>
</feature>
<feature type="helix" evidence="4">
    <location>
        <begin position="245"/>
        <end position="253"/>
    </location>
</feature>
<feature type="helix" evidence="4">
    <location>
        <begin position="264"/>
        <end position="266"/>
    </location>
</feature>
<feature type="strand" evidence="4">
    <location>
        <begin position="283"/>
        <end position="291"/>
    </location>
</feature>
<feature type="helix" evidence="4">
    <location>
        <begin position="292"/>
        <end position="297"/>
    </location>
</feature>
<feature type="strand" evidence="4">
    <location>
        <begin position="304"/>
        <end position="313"/>
    </location>
</feature>
<feature type="helix" evidence="4">
    <location>
        <begin position="326"/>
        <end position="339"/>
    </location>
</feature>
<feature type="helix" evidence="4">
    <location>
        <begin position="343"/>
        <end position="345"/>
    </location>
</feature>
<feature type="strand" evidence="4">
    <location>
        <begin position="348"/>
        <end position="350"/>
    </location>
</feature>
<feature type="helix" evidence="4">
    <location>
        <begin position="357"/>
        <end position="370"/>
    </location>
</feature>
<feature type="helix" evidence="4">
    <location>
        <begin position="372"/>
        <end position="377"/>
    </location>
</feature>
<feature type="helix" evidence="4">
    <location>
        <begin position="384"/>
        <end position="387"/>
    </location>
</feature>
<feature type="turn" evidence="4">
    <location>
        <begin position="391"/>
        <end position="393"/>
    </location>
</feature>
<feature type="helix" evidence="4">
    <location>
        <begin position="394"/>
        <end position="408"/>
    </location>
</feature>
<feature type="strand" evidence="4">
    <location>
        <begin position="419"/>
        <end position="421"/>
    </location>
</feature>
<feature type="strand" evidence="4">
    <location>
        <begin position="430"/>
        <end position="432"/>
    </location>
</feature>
<feature type="strand" evidence="4">
    <location>
        <begin position="439"/>
        <end position="447"/>
    </location>
</feature>
<feature type="turn" evidence="4">
    <location>
        <begin position="448"/>
        <end position="450"/>
    </location>
</feature>
<feature type="strand" evidence="4">
    <location>
        <begin position="451"/>
        <end position="458"/>
    </location>
</feature>
<feature type="helix" evidence="4">
    <location>
        <begin position="460"/>
        <end position="465"/>
    </location>
</feature>
<evidence type="ECO:0000255" key="1">
    <source>
        <dbReference type="PROSITE-ProRule" id="PRU01348"/>
    </source>
</evidence>
<evidence type="ECO:0000256" key="2">
    <source>
        <dbReference type="SAM" id="MobiDB-lite"/>
    </source>
</evidence>
<evidence type="ECO:0000305" key="3"/>
<evidence type="ECO:0007829" key="4">
    <source>
        <dbReference type="PDB" id="1TQY"/>
    </source>
</evidence>
<sequence>MPLDAAPVDPASRGPVSAFEPPSSHGADDDDDHRTNASKELFGLKRRVVITGVGVRAPGGNGTRQFWELLTSGRTATRRISFFDPSPYRSQVAAEADFDPVAEGFGPRELDRMDRASQFAVACAREAFAASGLDPDTLDPARVGVSLGSAVAAATSLEREYLLLSDSGRDWEVDAAWLSRHMFDYLVPSVMPAEVAWAVGAEGPVTMVSTGCTSGLDSVGNAVRAIEEGSADVMFAGAADTPITPIVVACFDAIRATTARNDDPEHASRPFDGTRDGFVLAEGAAMFVLEDYDSALARGARIHAEISGYATRCNAYHMTGLKADGREMAETIRVALDESRTDATDIDYINAHGSGTRQNDRHETAAYKRALGEHARRTPVSSIKSMVGHSLGAIGSLEIAACVLALEHGVVPPTANLRTSDPECDLDYVPLEARERKLRSVLTVGSGFGGFQSAMVLRDAETAGAAA</sequence>